<dbReference type="EMBL" id="AP009384">
    <property type="protein sequence ID" value="BAF90312.1"/>
    <property type="molecule type" value="Genomic_DNA"/>
</dbReference>
<dbReference type="RefSeq" id="WP_012172834.1">
    <property type="nucleotide sequence ID" value="NC_009937.1"/>
</dbReference>
<dbReference type="SMR" id="A8HVH0"/>
<dbReference type="STRING" id="438753.AZC_4314"/>
<dbReference type="KEGG" id="azc:AZC_4314"/>
<dbReference type="eggNOG" id="COG0236">
    <property type="taxonomic scope" value="Bacteria"/>
</dbReference>
<dbReference type="HOGENOM" id="CLU_108696_5_1_5"/>
<dbReference type="UniPathway" id="UPA00094"/>
<dbReference type="Proteomes" id="UP000000270">
    <property type="component" value="Chromosome"/>
</dbReference>
<dbReference type="GO" id="GO:0005829">
    <property type="term" value="C:cytosol"/>
    <property type="evidence" value="ECO:0007669"/>
    <property type="project" value="TreeGrafter"/>
</dbReference>
<dbReference type="GO" id="GO:0016020">
    <property type="term" value="C:membrane"/>
    <property type="evidence" value="ECO:0007669"/>
    <property type="project" value="GOC"/>
</dbReference>
<dbReference type="GO" id="GO:0000035">
    <property type="term" value="F:acyl binding"/>
    <property type="evidence" value="ECO:0007669"/>
    <property type="project" value="TreeGrafter"/>
</dbReference>
<dbReference type="GO" id="GO:0000036">
    <property type="term" value="F:acyl carrier activity"/>
    <property type="evidence" value="ECO:0007669"/>
    <property type="project" value="UniProtKB-UniRule"/>
</dbReference>
<dbReference type="GO" id="GO:0009245">
    <property type="term" value="P:lipid A biosynthetic process"/>
    <property type="evidence" value="ECO:0007669"/>
    <property type="project" value="TreeGrafter"/>
</dbReference>
<dbReference type="FunFam" id="1.10.1200.10:FF:000001">
    <property type="entry name" value="Acyl carrier protein"/>
    <property type="match status" value="1"/>
</dbReference>
<dbReference type="Gene3D" id="1.10.1200.10">
    <property type="entry name" value="ACP-like"/>
    <property type="match status" value="1"/>
</dbReference>
<dbReference type="HAMAP" id="MF_01217">
    <property type="entry name" value="Acyl_carrier"/>
    <property type="match status" value="1"/>
</dbReference>
<dbReference type="InterPro" id="IPR003231">
    <property type="entry name" value="ACP"/>
</dbReference>
<dbReference type="InterPro" id="IPR036736">
    <property type="entry name" value="ACP-like_sf"/>
</dbReference>
<dbReference type="InterPro" id="IPR009081">
    <property type="entry name" value="PP-bd_ACP"/>
</dbReference>
<dbReference type="InterPro" id="IPR006162">
    <property type="entry name" value="Ppantetheine_attach_site"/>
</dbReference>
<dbReference type="NCBIfam" id="TIGR00517">
    <property type="entry name" value="acyl_carrier"/>
    <property type="match status" value="1"/>
</dbReference>
<dbReference type="NCBIfam" id="NF002148">
    <property type="entry name" value="PRK00982.1-2"/>
    <property type="match status" value="1"/>
</dbReference>
<dbReference type="NCBIfam" id="NF002149">
    <property type="entry name" value="PRK00982.1-3"/>
    <property type="match status" value="1"/>
</dbReference>
<dbReference type="NCBIfam" id="NF002150">
    <property type="entry name" value="PRK00982.1-4"/>
    <property type="match status" value="1"/>
</dbReference>
<dbReference type="NCBIfam" id="NF002151">
    <property type="entry name" value="PRK00982.1-5"/>
    <property type="match status" value="1"/>
</dbReference>
<dbReference type="PANTHER" id="PTHR20863">
    <property type="entry name" value="ACYL CARRIER PROTEIN"/>
    <property type="match status" value="1"/>
</dbReference>
<dbReference type="PANTHER" id="PTHR20863:SF76">
    <property type="entry name" value="CARRIER DOMAIN-CONTAINING PROTEIN"/>
    <property type="match status" value="1"/>
</dbReference>
<dbReference type="Pfam" id="PF00550">
    <property type="entry name" value="PP-binding"/>
    <property type="match status" value="1"/>
</dbReference>
<dbReference type="SUPFAM" id="SSF47336">
    <property type="entry name" value="ACP-like"/>
    <property type="match status" value="1"/>
</dbReference>
<dbReference type="PROSITE" id="PS50075">
    <property type="entry name" value="CARRIER"/>
    <property type="match status" value="1"/>
</dbReference>
<dbReference type="PROSITE" id="PS00012">
    <property type="entry name" value="PHOSPHOPANTETHEINE"/>
    <property type="match status" value="1"/>
</dbReference>
<evidence type="ECO:0000255" key="1">
    <source>
        <dbReference type="HAMAP-Rule" id="MF_01217"/>
    </source>
</evidence>
<evidence type="ECO:0000255" key="2">
    <source>
        <dbReference type="PROSITE-ProRule" id="PRU00258"/>
    </source>
</evidence>
<proteinExistence type="inferred from homology"/>
<sequence length="78" mass="8438">MSDIAERVKKIVAEHLGVEPEKVTENASFIDDLGADSLDTVELVMAFEEAFNTEIPDDAAETILTVGDAIKFLEKNAG</sequence>
<comment type="function">
    <text evidence="1">Carrier of the growing fatty acid chain in fatty acid biosynthesis.</text>
</comment>
<comment type="pathway">
    <text evidence="1">Lipid metabolism; fatty acid biosynthesis.</text>
</comment>
<comment type="subcellular location">
    <subcellularLocation>
        <location evidence="1">Cytoplasm</location>
    </subcellularLocation>
</comment>
<comment type="PTM">
    <text evidence="1">4'-phosphopantetheine is transferred from CoA to a specific serine of apo-ACP by AcpS. This modification is essential for activity because fatty acids are bound in thioester linkage to the sulfhydryl of the prosthetic group.</text>
</comment>
<comment type="similarity">
    <text evidence="1">Belongs to the acyl carrier protein (ACP) family.</text>
</comment>
<accession>A8HVH0</accession>
<reference key="1">
    <citation type="submission" date="2007-04" db="EMBL/GenBank/DDBJ databases">
        <title>Complete genome sequence of the nitrogen-fixing bacterium Azorhizobium caulinodans ORS571.</title>
        <authorList>
            <person name="Lee K.B."/>
            <person name="Backer P.D."/>
            <person name="Aono T."/>
            <person name="Liu C.T."/>
            <person name="Suzuki S."/>
            <person name="Suzuki T."/>
            <person name="Kaneko T."/>
            <person name="Yamada M."/>
            <person name="Tabata S."/>
            <person name="Kupfer D.M."/>
            <person name="Najar F.Z."/>
            <person name="Wiley G.B."/>
            <person name="Roe B."/>
            <person name="Binnewies T."/>
            <person name="Ussery D."/>
            <person name="Vereecke D."/>
            <person name="Gevers D."/>
            <person name="Holsters M."/>
            <person name="Oyaizu H."/>
        </authorList>
    </citation>
    <scope>NUCLEOTIDE SEQUENCE [LARGE SCALE GENOMIC DNA]</scope>
    <source>
        <strain>ATCC 43989 / DSM 5975 / JCM 20966 / LMG 6465 / NBRC 14845 / NCIMB 13405 / ORS 571</strain>
    </source>
</reference>
<feature type="chain" id="PRO_1000073119" description="Acyl carrier protein">
    <location>
        <begin position="1"/>
        <end position="78"/>
    </location>
</feature>
<feature type="domain" description="Carrier" evidence="2">
    <location>
        <begin position="2"/>
        <end position="77"/>
    </location>
</feature>
<feature type="modified residue" description="O-(pantetheine 4'-phosphoryl)serine" evidence="2">
    <location>
        <position position="37"/>
    </location>
</feature>
<organism>
    <name type="scientific">Azorhizobium caulinodans (strain ATCC 43989 / DSM 5975 / JCM 20966 / LMG 6465 / NBRC 14845 / NCIMB 13405 / ORS 571)</name>
    <dbReference type="NCBI Taxonomy" id="438753"/>
    <lineage>
        <taxon>Bacteria</taxon>
        <taxon>Pseudomonadati</taxon>
        <taxon>Pseudomonadota</taxon>
        <taxon>Alphaproteobacteria</taxon>
        <taxon>Hyphomicrobiales</taxon>
        <taxon>Xanthobacteraceae</taxon>
        <taxon>Azorhizobium</taxon>
    </lineage>
</organism>
<gene>
    <name evidence="1" type="primary">acpP</name>
    <name type="ordered locus">AZC_4314</name>
</gene>
<name>ACP_AZOC5</name>
<protein>
    <recommendedName>
        <fullName evidence="1">Acyl carrier protein</fullName>
        <shortName evidence="1">ACP</shortName>
    </recommendedName>
</protein>
<keyword id="KW-0963">Cytoplasm</keyword>
<keyword id="KW-0275">Fatty acid biosynthesis</keyword>
<keyword id="KW-0276">Fatty acid metabolism</keyword>
<keyword id="KW-0444">Lipid biosynthesis</keyword>
<keyword id="KW-0443">Lipid metabolism</keyword>
<keyword id="KW-0596">Phosphopantetheine</keyword>
<keyword id="KW-0597">Phosphoprotein</keyword>
<keyword id="KW-1185">Reference proteome</keyword>